<sequence length="117" mass="12479">MKKIGVAGLQREQIKKTIEATAPGCFEVFIHNDMEAAMKVKSGQLDYYIGACNTGAGAALSIAIAVIGYNKSCTIAKPGIKAKDEHIAKMIAEGKVAFGLSVEHVEHAIPMLINHLK</sequence>
<evidence type="ECO:0000305" key="1"/>
<proteinExistence type="predicted"/>
<organism>
    <name type="scientific">Escherichia coli (strain K12)</name>
    <dbReference type="NCBI Taxonomy" id="83333"/>
    <lineage>
        <taxon>Bacteria</taxon>
        <taxon>Pseudomonadati</taxon>
        <taxon>Pseudomonadota</taxon>
        <taxon>Gammaproteobacteria</taxon>
        <taxon>Enterobacterales</taxon>
        <taxon>Enterobacteriaceae</taxon>
        <taxon>Escherichia</taxon>
    </lineage>
</organism>
<name>YHFU_ECOLI</name>
<reference key="1">
    <citation type="journal article" date="1997" name="Science">
        <title>The complete genome sequence of Escherichia coli K-12.</title>
        <authorList>
            <person name="Blattner F.R."/>
            <person name="Plunkett G. III"/>
            <person name="Bloch C.A."/>
            <person name="Perna N.T."/>
            <person name="Burland V."/>
            <person name="Riley M."/>
            <person name="Collado-Vides J."/>
            <person name="Glasner J.D."/>
            <person name="Rode C.K."/>
            <person name="Mayhew G.F."/>
            <person name="Gregor J."/>
            <person name="Davis N.W."/>
            <person name="Kirkpatrick H.A."/>
            <person name="Goeden M.A."/>
            <person name="Rose D.J."/>
            <person name="Mau B."/>
            <person name="Shao Y."/>
        </authorList>
    </citation>
    <scope>NUCLEOTIDE SEQUENCE [LARGE SCALE GENOMIC DNA]</scope>
    <source>
        <strain>K12 / MG1655 / ATCC 47076</strain>
    </source>
</reference>
<reference key="2">
    <citation type="journal article" date="2006" name="Mol. Syst. Biol.">
        <title>Highly accurate genome sequences of Escherichia coli K-12 strains MG1655 and W3110.</title>
        <authorList>
            <person name="Hayashi K."/>
            <person name="Morooka N."/>
            <person name="Yamamoto Y."/>
            <person name="Fujita K."/>
            <person name="Isono K."/>
            <person name="Choi S."/>
            <person name="Ohtsubo E."/>
            <person name="Baba T."/>
            <person name="Wanner B.L."/>
            <person name="Mori H."/>
            <person name="Horiuchi T."/>
        </authorList>
    </citation>
    <scope>NUCLEOTIDE SEQUENCE [LARGE SCALE GENOMIC DNA]</scope>
    <source>
        <strain>K12 / W3110 / ATCC 27325 / DSM 5911</strain>
    </source>
</reference>
<feature type="chain" id="PRO_0000169530" description="Uncharacterized protein YhfU">
    <location>
        <begin position="1"/>
        <end position="117"/>
    </location>
</feature>
<protein>
    <recommendedName>
        <fullName>Uncharacterized protein YhfU</fullName>
    </recommendedName>
</protein>
<dbReference type="EMBL" id="U18997">
    <property type="protein sequence ID" value="AAA58175.1"/>
    <property type="status" value="ALT_INIT"/>
    <property type="molecule type" value="Genomic_DNA"/>
</dbReference>
<dbReference type="EMBL" id="U00096">
    <property type="protein sequence ID" value="AAC76403.2"/>
    <property type="molecule type" value="Genomic_DNA"/>
</dbReference>
<dbReference type="EMBL" id="AP009048">
    <property type="protein sequence ID" value="BAE77913.1"/>
    <property type="molecule type" value="Genomic_DNA"/>
</dbReference>
<dbReference type="PIR" id="E65132">
    <property type="entry name" value="E65132"/>
</dbReference>
<dbReference type="RefSeq" id="NP_417837.2">
    <property type="nucleotide sequence ID" value="NC_000913.3"/>
</dbReference>
<dbReference type="RefSeq" id="WP_000719728.1">
    <property type="nucleotide sequence ID" value="NZ_SSZK01000008.1"/>
</dbReference>
<dbReference type="SMR" id="P64631"/>
<dbReference type="BioGRID" id="4260763">
    <property type="interactions" value="98"/>
</dbReference>
<dbReference type="BioGRID" id="852201">
    <property type="interactions" value="1"/>
</dbReference>
<dbReference type="FunCoup" id="P64631">
    <property type="interactions" value="182"/>
</dbReference>
<dbReference type="IntAct" id="P64631">
    <property type="interactions" value="1"/>
</dbReference>
<dbReference type="STRING" id="511145.b3378"/>
<dbReference type="jPOST" id="P64631"/>
<dbReference type="PaxDb" id="511145-b3378"/>
<dbReference type="EnsemblBacteria" id="AAC76403">
    <property type="protein sequence ID" value="AAC76403"/>
    <property type="gene ID" value="b3378"/>
</dbReference>
<dbReference type="GeneID" id="947892"/>
<dbReference type="KEGG" id="ecj:JW5697"/>
<dbReference type="KEGG" id="eco:b3378"/>
<dbReference type="KEGG" id="ecoc:C3026_18335"/>
<dbReference type="PATRIC" id="fig|511145.12.peg.3471"/>
<dbReference type="EchoBASE" id="EB2752"/>
<dbReference type="eggNOG" id="ENOG5031F0U">
    <property type="taxonomic scope" value="Bacteria"/>
</dbReference>
<dbReference type="HOGENOM" id="CLU_133709_0_0_6"/>
<dbReference type="InParanoid" id="P64631"/>
<dbReference type="OMA" id="DYYFGAC"/>
<dbReference type="OrthoDB" id="5191605at2"/>
<dbReference type="BioCyc" id="EcoCyc:G7730-MONOMER"/>
<dbReference type="PRO" id="PR:P64631"/>
<dbReference type="Proteomes" id="UP000000625">
    <property type="component" value="Chromosome"/>
</dbReference>
<dbReference type="InterPro" id="IPR021238">
    <property type="entry name" value="DUF2620"/>
</dbReference>
<dbReference type="Pfam" id="PF10941">
    <property type="entry name" value="DUF2620"/>
    <property type="match status" value="1"/>
</dbReference>
<keyword id="KW-1185">Reference proteome</keyword>
<gene>
    <name type="primary">yhfU</name>
    <name type="ordered locus">b3378</name>
    <name type="ordered locus">JW5697</name>
</gene>
<accession>P64631</accession>
<accession>P45547</accession>
<accession>Q2M743</accession>
<comment type="sequence caution" evidence="1">
    <conflict type="erroneous initiation">
        <sequence resource="EMBL-CDS" id="AAA58175"/>
    </conflict>
</comment>